<name>CYSG2_YERP3</name>
<reference key="1">
    <citation type="journal article" date="2007" name="PLoS Genet.">
        <title>The complete genome sequence of Yersinia pseudotuberculosis IP31758, the causative agent of Far East scarlet-like fever.</title>
        <authorList>
            <person name="Eppinger M."/>
            <person name="Rosovitz M.J."/>
            <person name="Fricke W.F."/>
            <person name="Rasko D.A."/>
            <person name="Kokorina G."/>
            <person name="Fayolle C."/>
            <person name="Lindler L.E."/>
            <person name="Carniel E."/>
            <person name="Ravel J."/>
        </authorList>
    </citation>
    <scope>NUCLEOTIDE SEQUENCE [LARGE SCALE GENOMIC DNA]</scope>
    <source>
        <strain>IP 31758</strain>
    </source>
</reference>
<protein>
    <recommendedName>
        <fullName evidence="1">Siroheme synthase 2</fullName>
    </recommendedName>
    <domain>
        <recommendedName>
            <fullName evidence="1">Uroporphyrinogen-III C-methyltransferase 2</fullName>
            <shortName evidence="1">Urogen III methylase 2</shortName>
            <ecNumber evidence="1">2.1.1.107</ecNumber>
        </recommendedName>
        <alternativeName>
            <fullName evidence="1">SUMT 2</fullName>
        </alternativeName>
        <alternativeName>
            <fullName evidence="1">Uroporphyrinogen III methylase 2</fullName>
            <shortName evidence="1">UROM 2</shortName>
        </alternativeName>
    </domain>
    <domain>
        <recommendedName>
            <fullName evidence="1">Precorrin-2 dehydrogenase 2</fullName>
            <ecNumber evidence="1">1.3.1.76</ecNumber>
        </recommendedName>
    </domain>
    <domain>
        <recommendedName>
            <fullName evidence="1">Sirohydrochlorin ferrochelatase 2</fullName>
            <ecNumber evidence="1">4.99.1.4</ecNumber>
        </recommendedName>
    </domain>
</protein>
<keyword id="KW-0169">Cobalamin biosynthesis</keyword>
<keyword id="KW-0456">Lyase</keyword>
<keyword id="KW-0489">Methyltransferase</keyword>
<keyword id="KW-0511">Multifunctional enzyme</keyword>
<keyword id="KW-0520">NAD</keyword>
<keyword id="KW-0560">Oxidoreductase</keyword>
<keyword id="KW-0597">Phosphoprotein</keyword>
<keyword id="KW-0627">Porphyrin biosynthesis</keyword>
<keyword id="KW-0949">S-adenosyl-L-methionine</keyword>
<keyword id="KW-0808">Transferase</keyword>
<proteinExistence type="inferred from homology"/>
<accession>A7FNS9</accession>
<dbReference type="EC" id="2.1.1.107" evidence="1"/>
<dbReference type="EC" id="1.3.1.76" evidence="1"/>
<dbReference type="EC" id="4.99.1.4" evidence="1"/>
<dbReference type="EMBL" id="CP000720">
    <property type="protein sequence ID" value="ABS46625.1"/>
    <property type="molecule type" value="Genomic_DNA"/>
</dbReference>
<dbReference type="SMR" id="A7FNS9"/>
<dbReference type="KEGG" id="ypi:YpsIP31758_3959"/>
<dbReference type="HOGENOM" id="CLU_011276_2_1_6"/>
<dbReference type="UniPathway" id="UPA00148">
    <property type="reaction ID" value="UER00211"/>
</dbReference>
<dbReference type="UniPathway" id="UPA00148">
    <property type="reaction ID" value="UER00222"/>
</dbReference>
<dbReference type="UniPathway" id="UPA00262">
    <property type="reaction ID" value="UER00211"/>
</dbReference>
<dbReference type="UniPathway" id="UPA00262">
    <property type="reaction ID" value="UER00222"/>
</dbReference>
<dbReference type="UniPathway" id="UPA00262">
    <property type="reaction ID" value="UER00376"/>
</dbReference>
<dbReference type="Proteomes" id="UP000002412">
    <property type="component" value="Chromosome"/>
</dbReference>
<dbReference type="GO" id="GO:0051287">
    <property type="term" value="F:NAD binding"/>
    <property type="evidence" value="ECO:0007669"/>
    <property type="project" value="InterPro"/>
</dbReference>
<dbReference type="GO" id="GO:0043115">
    <property type="term" value="F:precorrin-2 dehydrogenase activity"/>
    <property type="evidence" value="ECO:0007669"/>
    <property type="project" value="UniProtKB-UniRule"/>
</dbReference>
<dbReference type="GO" id="GO:0051266">
    <property type="term" value="F:sirohydrochlorin ferrochelatase activity"/>
    <property type="evidence" value="ECO:0007669"/>
    <property type="project" value="UniProtKB-EC"/>
</dbReference>
<dbReference type="GO" id="GO:0004851">
    <property type="term" value="F:uroporphyrin-III C-methyltransferase activity"/>
    <property type="evidence" value="ECO:0007669"/>
    <property type="project" value="UniProtKB-UniRule"/>
</dbReference>
<dbReference type="GO" id="GO:0009236">
    <property type="term" value="P:cobalamin biosynthetic process"/>
    <property type="evidence" value="ECO:0007669"/>
    <property type="project" value="UniProtKB-UniRule"/>
</dbReference>
<dbReference type="GO" id="GO:0032259">
    <property type="term" value="P:methylation"/>
    <property type="evidence" value="ECO:0007669"/>
    <property type="project" value="UniProtKB-KW"/>
</dbReference>
<dbReference type="GO" id="GO:0019354">
    <property type="term" value="P:siroheme biosynthetic process"/>
    <property type="evidence" value="ECO:0007669"/>
    <property type="project" value="UniProtKB-UniRule"/>
</dbReference>
<dbReference type="CDD" id="cd11642">
    <property type="entry name" value="SUMT"/>
    <property type="match status" value="1"/>
</dbReference>
<dbReference type="FunFam" id="1.10.8.210:FF:000001">
    <property type="entry name" value="Siroheme synthase"/>
    <property type="match status" value="1"/>
</dbReference>
<dbReference type="FunFam" id="3.30.160.110:FF:000001">
    <property type="entry name" value="Siroheme synthase"/>
    <property type="match status" value="1"/>
</dbReference>
<dbReference type="FunFam" id="3.30.950.10:FF:000001">
    <property type="entry name" value="Siroheme synthase"/>
    <property type="match status" value="1"/>
</dbReference>
<dbReference type="FunFam" id="3.40.1010.10:FF:000001">
    <property type="entry name" value="Siroheme synthase"/>
    <property type="match status" value="1"/>
</dbReference>
<dbReference type="FunFam" id="3.40.50.720:FF:000092">
    <property type="entry name" value="Siroheme synthase"/>
    <property type="match status" value="1"/>
</dbReference>
<dbReference type="Gene3D" id="3.40.1010.10">
    <property type="entry name" value="Cobalt-precorrin-4 Transmethylase, Domain 1"/>
    <property type="match status" value="1"/>
</dbReference>
<dbReference type="Gene3D" id="3.30.950.10">
    <property type="entry name" value="Methyltransferase, Cobalt-precorrin-4 Transmethylase, Domain 2"/>
    <property type="match status" value="1"/>
</dbReference>
<dbReference type="Gene3D" id="3.40.50.720">
    <property type="entry name" value="NAD(P)-binding Rossmann-like Domain"/>
    <property type="match status" value="1"/>
</dbReference>
<dbReference type="Gene3D" id="1.10.8.210">
    <property type="entry name" value="Sirohaem synthase, dimerisation domain"/>
    <property type="match status" value="1"/>
</dbReference>
<dbReference type="Gene3D" id="3.30.160.110">
    <property type="entry name" value="Siroheme synthase, domain 2"/>
    <property type="match status" value="1"/>
</dbReference>
<dbReference type="HAMAP" id="MF_01646">
    <property type="entry name" value="Siroheme_synth"/>
    <property type="match status" value="1"/>
</dbReference>
<dbReference type="InterPro" id="IPR000878">
    <property type="entry name" value="4pyrrol_Mease"/>
</dbReference>
<dbReference type="InterPro" id="IPR035996">
    <property type="entry name" value="4pyrrol_Methylase_sf"/>
</dbReference>
<dbReference type="InterPro" id="IPR014777">
    <property type="entry name" value="4pyrrole_Mease_sub1"/>
</dbReference>
<dbReference type="InterPro" id="IPR014776">
    <property type="entry name" value="4pyrrole_Mease_sub2"/>
</dbReference>
<dbReference type="InterPro" id="IPR006366">
    <property type="entry name" value="CobA/CysG_C"/>
</dbReference>
<dbReference type="InterPro" id="IPR036291">
    <property type="entry name" value="NAD(P)-bd_dom_sf"/>
</dbReference>
<dbReference type="InterPro" id="IPR050161">
    <property type="entry name" value="Siro_Cobalamin_biosynth"/>
</dbReference>
<dbReference type="InterPro" id="IPR037115">
    <property type="entry name" value="Sirohaem_synt_dimer_dom_sf"/>
</dbReference>
<dbReference type="InterPro" id="IPR012409">
    <property type="entry name" value="Sirohaem_synth"/>
</dbReference>
<dbReference type="InterPro" id="IPR028281">
    <property type="entry name" value="Sirohaem_synthase_central"/>
</dbReference>
<dbReference type="InterPro" id="IPR019478">
    <property type="entry name" value="Sirohaem_synthase_dimer_dom"/>
</dbReference>
<dbReference type="InterPro" id="IPR006367">
    <property type="entry name" value="Sirohaem_synthase_N"/>
</dbReference>
<dbReference type="InterPro" id="IPR003043">
    <property type="entry name" value="Uropor_MeTrfase_CS"/>
</dbReference>
<dbReference type="NCBIfam" id="TIGR01469">
    <property type="entry name" value="cobA_cysG_Cterm"/>
    <property type="match status" value="1"/>
</dbReference>
<dbReference type="NCBIfam" id="TIGR01470">
    <property type="entry name" value="cysG_Nterm"/>
    <property type="match status" value="1"/>
</dbReference>
<dbReference type="NCBIfam" id="NF004790">
    <property type="entry name" value="PRK06136.1"/>
    <property type="match status" value="1"/>
</dbReference>
<dbReference type="NCBIfam" id="NF007922">
    <property type="entry name" value="PRK10637.1"/>
    <property type="match status" value="1"/>
</dbReference>
<dbReference type="PANTHER" id="PTHR45790:SF1">
    <property type="entry name" value="SIROHEME SYNTHASE"/>
    <property type="match status" value="1"/>
</dbReference>
<dbReference type="PANTHER" id="PTHR45790">
    <property type="entry name" value="SIROHEME SYNTHASE-RELATED"/>
    <property type="match status" value="1"/>
</dbReference>
<dbReference type="Pfam" id="PF10414">
    <property type="entry name" value="CysG_dimeriser"/>
    <property type="match status" value="1"/>
</dbReference>
<dbReference type="Pfam" id="PF13241">
    <property type="entry name" value="NAD_binding_7"/>
    <property type="match status" value="1"/>
</dbReference>
<dbReference type="Pfam" id="PF14824">
    <property type="entry name" value="Sirohm_synth_M"/>
    <property type="match status" value="1"/>
</dbReference>
<dbReference type="Pfam" id="PF00590">
    <property type="entry name" value="TP_methylase"/>
    <property type="match status" value="1"/>
</dbReference>
<dbReference type="PIRSF" id="PIRSF036426">
    <property type="entry name" value="Sirohaem_synth"/>
    <property type="match status" value="1"/>
</dbReference>
<dbReference type="SUPFAM" id="SSF51735">
    <property type="entry name" value="NAD(P)-binding Rossmann-fold domains"/>
    <property type="match status" value="1"/>
</dbReference>
<dbReference type="SUPFAM" id="SSF75615">
    <property type="entry name" value="Siroheme synthase middle domains-like"/>
    <property type="match status" value="1"/>
</dbReference>
<dbReference type="SUPFAM" id="SSF53790">
    <property type="entry name" value="Tetrapyrrole methylase"/>
    <property type="match status" value="1"/>
</dbReference>
<dbReference type="PROSITE" id="PS00839">
    <property type="entry name" value="SUMT_1"/>
    <property type="match status" value="1"/>
</dbReference>
<dbReference type="PROSITE" id="PS00840">
    <property type="entry name" value="SUMT_2"/>
    <property type="match status" value="1"/>
</dbReference>
<sequence>MDYFPIFCQLQHKACLLVGGGEIAERKARLLLDAGALVTVNACEFTPQFHHWADQGQLSLISGEFVPELLADKWLVIAATDQLSVNALVYQSANQQRIFCNVVDDPKRTSFIMPSIIDRSPIMIAVSSGGKAPVLARLLREKLEALLPQHLGQLAQLAGNLRQRVKQHFAAMTERRRFWEKLLTHDRLAQSLANNDHVQADQHVEQLFSAPLTDRGEVVLVGAGPGDAGLLTLKGLQQIQQADVVVYDRLVSDEVMNLVRRDAERIFVGKQSGHHCVPQEQINQILLQQAQSGKRVVRLKGGDPFIFGRGGEELEELAGYGIPFSVVPGITAASGCSAYSGIPLTHRDHAQSVRLVTGHAKKEGQLDWANLAAEKQTLVFYMGLSQAGEIQQQLIQHGMPATTQVALVENGTSRHQRVVSGELSQLALLSQQVSSPSLIIVGSVVSLREKLNWFSSRHHDDQPKVTECVAHVG</sequence>
<comment type="function">
    <text evidence="1">Multifunctional enzyme that catalyzes the SAM-dependent methylations of uroporphyrinogen III at position C-2 and C-7 to form precorrin-2 via precorrin-1. Then it catalyzes the NAD-dependent ring dehydrogenation of precorrin-2 to yield sirohydrochlorin. Finally, it catalyzes the ferrochelation of sirohydrochlorin to yield siroheme.</text>
</comment>
<comment type="catalytic activity">
    <reaction evidence="1">
        <text>uroporphyrinogen III + 2 S-adenosyl-L-methionine = precorrin-2 + 2 S-adenosyl-L-homocysteine + H(+)</text>
        <dbReference type="Rhea" id="RHEA:32459"/>
        <dbReference type="ChEBI" id="CHEBI:15378"/>
        <dbReference type="ChEBI" id="CHEBI:57308"/>
        <dbReference type="ChEBI" id="CHEBI:57856"/>
        <dbReference type="ChEBI" id="CHEBI:58827"/>
        <dbReference type="ChEBI" id="CHEBI:59789"/>
        <dbReference type="EC" id="2.1.1.107"/>
    </reaction>
</comment>
<comment type="catalytic activity">
    <reaction evidence="1">
        <text>precorrin-2 + NAD(+) = sirohydrochlorin + NADH + 2 H(+)</text>
        <dbReference type="Rhea" id="RHEA:15613"/>
        <dbReference type="ChEBI" id="CHEBI:15378"/>
        <dbReference type="ChEBI" id="CHEBI:57540"/>
        <dbReference type="ChEBI" id="CHEBI:57945"/>
        <dbReference type="ChEBI" id="CHEBI:58351"/>
        <dbReference type="ChEBI" id="CHEBI:58827"/>
        <dbReference type="EC" id="1.3.1.76"/>
    </reaction>
</comment>
<comment type="catalytic activity">
    <reaction evidence="1">
        <text>siroheme + 2 H(+) = sirohydrochlorin + Fe(2+)</text>
        <dbReference type="Rhea" id="RHEA:24360"/>
        <dbReference type="ChEBI" id="CHEBI:15378"/>
        <dbReference type="ChEBI" id="CHEBI:29033"/>
        <dbReference type="ChEBI" id="CHEBI:58351"/>
        <dbReference type="ChEBI" id="CHEBI:60052"/>
        <dbReference type="EC" id="4.99.1.4"/>
    </reaction>
</comment>
<comment type="pathway">
    <text evidence="1">Cofactor biosynthesis; adenosylcobalamin biosynthesis; precorrin-2 from uroporphyrinogen III: step 1/1.</text>
</comment>
<comment type="pathway">
    <text evidence="1">Cofactor biosynthesis; adenosylcobalamin biosynthesis; sirohydrochlorin from precorrin-2: step 1/1.</text>
</comment>
<comment type="pathway">
    <text evidence="1">Porphyrin-containing compound metabolism; siroheme biosynthesis; precorrin-2 from uroporphyrinogen III: step 1/1.</text>
</comment>
<comment type="pathway">
    <text evidence="1">Porphyrin-containing compound metabolism; siroheme biosynthesis; siroheme from sirohydrochlorin: step 1/1.</text>
</comment>
<comment type="pathway">
    <text evidence="1">Porphyrin-containing compound metabolism; siroheme biosynthesis; sirohydrochlorin from precorrin-2: step 1/1.</text>
</comment>
<comment type="similarity">
    <text evidence="1">In the N-terminal section; belongs to the precorrin-2 dehydrogenase / sirohydrochlorin ferrochelatase family.</text>
</comment>
<comment type="similarity">
    <text evidence="1">In the C-terminal section; belongs to the precorrin methyltransferase family.</text>
</comment>
<feature type="chain" id="PRO_0000330581" description="Siroheme synthase 2">
    <location>
        <begin position="1"/>
        <end position="473"/>
    </location>
</feature>
<feature type="region of interest" description="Precorrin-2 dehydrogenase /sirohydrochlorin ferrochelatase" evidence="1">
    <location>
        <begin position="1"/>
        <end position="204"/>
    </location>
</feature>
<feature type="region of interest" description="Uroporphyrinogen-III C-methyltransferase" evidence="1">
    <location>
        <begin position="216"/>
        <end position="473"/>
    </location>
</feature>
<feature type="active site" description="Proton acceptor" evidence="1">
    <location>
        <position position="248"/>
    </location>
</feature>
<feature type="active site" description="Proton donor" evidence="1">
    <location>
        <position position="270"/>
    </location>
</feature>
<feature type="binding site" evidence="1">
    <location>
        <begin position="22"/>
        <end position="23"/>
    </location>
    <ligand>
        <name>NAD(+)</name>
        <dbReference type="ChEBI" id="CHEBI:57540"/>
    </ligand>
</feature>
<feature type="binding site" evidence="1">
    <location>
        <begin position="43"/>
        <end position="44"/>
    </location>
    <ligand>
        <name>NAD(+)</name>
        <dbReference type="ChEBI" id="CHEBI:57540"/>
    </ligand>
</feature>
<feature type="binding site" evidence="1">
    <location>
        <position position="225"/>
    </location>
    <ligand>
        <name>S-adenosyl-L-methionine</name>
        <dbReference type="ChEBI" id="CHEBI:59789"/>
    </ligand>
</feature>
<feature type="binding site" evidence="1">
    <location>
        <begin position="301"/>
        <end position="303"/>
    </location>
    <ligand>
        <name>S-adenosyl-L-methionine</name>
        <dbReference type="ChEBI" id="CHEBI:59789"/>
    </ligand>
</feature>
<feature type="binding site" evidence="1">
    <location>
        <position position="306"/>
    </location>
    <ligand>
        <name>S-adenosyl-L-methionine</name>
        <dbReference type="ChEBI" id="CHEBI:59789"/>
    </ligand>
</feature>
<feature type="binding site" evidence="1">
    <location>
        <begin position="331"/>
        <end position="332"/>
    </location>
    <ligand>
        <name>S-adenosyl-L-methionine</name>
        <dbReference type="ChEBI" id="CHEBI:59789"/>
    </ligand>
</feature>
<feature type="binding site" evidence="1">
    <location>
        <position position="382"/>
    </location>
    <ligand>
        <name>S-adenosyl-L-methionine</name>
        <dbReference type="ChEBI" id="CHEBI:59789"/>
    </ligand>
</feature>
<feature type="binding site" evidence="1">
    <location>
        <position position="411"/>
    </location>
    <ligand>
        <name>S-adenosyl-L-methionine</name>
        <dbReference type="ChEBI" id="CHEBI:59789"/>
    </ligand>
</feature>
<feature type="modified residue" description="Phosphoserine" evidence="1">
    <location>
        <position position="128"/>
    </location>
</feature>
<evidence type="ECO:0000255" key="1">
    <source>
        <dbReference type="HAMAP-Rule" id="MF_01646"/>
    </source>
</evidence>
<organism>
    <name type="scientific">Yersinia pseudotuberculosis serotype O:1b (strain IP 31758)</name>
    <dbReference type="NCBI Taxonomy" id="349747"/>
    <lineage>
        <taxon>Bacteria</taxon>
        <taxon>Pseudomonadati</taxon>
        <taxon>Pseudomonadota</taxon>
        <taxon>Gammaproteobacteria</taxon>
        <taxon>Enterobacterales</taxon>
        <taxon>Yersiniaceae</taxon>
        <taxon>Yersinia</taxon>
    </lineage>
</organism>
<gene>
    <name evidence="1" type="primary">cysG2</name>
    <name type="ordered locus">YpsIP31758_3959</name>
</gene>